<reference key="1">
    <citation type="submission" date="2005-08" db="EMBL/GenBank/DDBJ databases">
        <title>Complete sequence of chromosome 1 of Nitrosospira multiformis ATCC 25196.</title>
        <authorList>
            <person name="Copeland A."/>
            <person name="Lucas S."/>
            <person name="Lapidus A."/>
            <person name="Barry K."/>
            <person name="Detter J.C."/>
            <person name="Glavina T."/>
            <person name="Hammon N."/>
            <person name="Israni S."/>
            <person name="Pitluck S."/>
            <person name="Chain P."/>
            <person name="Malfatti S."/>
            <person name="Shin M."/>
            <person name="Vergez L."/>
            <person name="Schmutz J."/>
            <person name="Larimer F."/>
            <person name="Land M."/>
            <person name="Hauser L."/>
            <person name="Kyrpides N."/>
            <person name="Lykidis A."/>
            <person name="Richardson P."/>
        </authorList>
    </citation>
    <scope>NUCLEOTIDE SEQUENCE [LARGE SCALE GENOMIC DNA]</scope>
    <source>
        <strain>ATCC 25196 / NCIMB 11849 / C 71</strain>
    </source>
</reference>
<name>CH60_NITMU</name>
<gene>
    <name evidence="1" type="primary">groEL</name>
    <name evidence="1" type="synonym">groL</name>
    <name type="ordered locus">Nmul_A2344</name>
</gene>
<feature type="chain" id="PRO_0000256940" description="Chaperonin GroEL">
    <location>
        <begin position="1"/>
        <end position="552"/>
    </location>
</feature>
<feature type="binding site" evidence="1">
    <location>
        <begin position="30"/>
        <end position="33"/>
    </location>
    <ligand>
        <name>ATP</name>
        <dbReference type="ChEBI" id="CHEBI:30616"/>
    </ligand>
</feature>
<feature type="binding site" evidence="1">
    <location>
        <position position="51"/>
    </location>
    <ligand>
        <name>ATP</name>
        <dbReference type="ChEBI" id="CHEBI:30616"/>
    </ligand>
</feature>
<feature type="binding site" evidence="1">
    <location>
        <begin position="87"/>
        <end position="91"/>
    </location>
    <ligand>
        <name>ATP</name>
        <dbReference type="ChEBI" id="CHEBI:30616"/>
    </ligand>
</feature>
<feature type="binding site" evidence="1">
    <location>
        <position position="415"/>
    </location>
    <ligand>
        <name>ATP</name>
        <dbReference type="ChEBI" id="CHEBI:30616"/>
    </ligand>
</feature>
<feature type="binding site" evidence="1">
    <location>
        <begin position="479"/>
        <end position="481"/>
    </location>
    <ligand>
        <name>ATP</name>
        <dbReference type="ChEBI" id="CHEBI:30616"/>
    </ligand>
</feature>
<feature type="binding site" evidence="1">
    <location>
        <position position="495"/>
    </location>
    <ligand>
        <name>ATP</name>
        <dbReference type="ChEBI" id="CHEBI:30616"/>
    </ligand>
</feature>
<evidence type="ECO:0000255" key="1">
    <source>
        <dbReference type="HAMAP-Rule" id="MF_00600"/>
    </source>
</evidence>
<comment type="function">
    <text evidence="1">Together with its co-chaperonin GroES, plays an essential role in assisting protein folding. The GroEL-GroES system forms a nano-cage that allows encapsulation of the non-native substrate proteins and provides a physical environment optimized to promote and accelerate protein folding.</text>
</comment>
<comment type="catalytic activity">
    <reaction evidence="1">
        <text>ATP + H2O + a folded polypeptide = ADP + phosphate + an unfolded polypeptide.</text>
        <dbReference type="EC" id="5.6.1.7"/>
    </reaction>
</comment>
<comment type="subunit">
    <text evidence="1">Forms a cylinder of 14 subunits composed of two heptameric rings stacked back-to-back. Interacts with the co-chaperonin GroES.</text>
</comment>
<comment type="subcellular location">
    <subcellularLocation>
        <location evidence="1">Cytoplasm</location>
    </subcellularLocation>
</comment>
<comment type="similarity">
    <text evidence="1">Belongs to the chaperonin (HSP60) family.</text>
</comment>
<accession>Q2Y6I6</accession>
<sequence>MAAKEVKFSDSARHKMVNGVNILADAVKVTLGPKGRNVVLERSYGSPTITKDGVSVAKEIELKDKFENMGAQMVKEVASKTSDVAGDGTTTATVLAQSIVKEGMKYVAAGMNPMDLKRGIDKAVVATVEELKKLSKPCTTGKEIAQVGSISANSDPEIGKIIADAMEKVGKEGVITVEDGSGLQNELEVVEGMQFDRGYLSPYFINNADRQIALLESPFILLHDKKISNIRDLLPVLEQVAKAGKPLLIIAEDVDGEALATLVVNNIRGILKTCAVKAPGFGDRRKAMLEDIAILTGGTVIAEEVGLSLEKATLAELGQAKRVEVGKEETTIIDGAGDTQNIEGRVKQIRAQIEEATSDYDKEKLQERVAKLAGGVALIKVGAATEVEMKEKKARVEDALHATRAAVEEGIVPGGGVALLRTRSAVSNLKGDNHDQDAGIKIVLRALEEPLRQIVANCGDEPSVVINKVLEGTENFGYNAASSEYGDMVQMGVLDPTKVTRYALQHAASIAGLMLTTDALVAEVPKEEGAGGGMGGGMGGMGGMGGMGGMDM</sequence>
<organism>
    <name type="scientific">Nitrosospira multiformis (strain ATCC 25196 / NCIMB 11849 / C 71)</name>
    <dbReference type="NCBI Taxonomy" id="323848"/>
    <lineage>
        <taxon>Bacteria</taxon>
        <taxon>Pseudomonadati</taxon>
        <taxon>Pseudomonadota</taxon>
        <taxon>Betaproteobacteria</taxon>
        <taxon>Nitrosomonadales</taxon>
        <taxon>Nitrosomonadaceae</taxon>
        <taxon>Nitrosospira</taxon>
    </lineage>
</organism>
<protein>
    <recommendedName>
        <fullName evidence="1">Chaperonin GroEL</fullName>
        <ecNumber evidence="1">5.6.1.7</ecNumber>
    </recommendedName>
    <alternativeName>
        <fullName evidence="1">60 kDa chaperonin</fullName>
    </alternativeName>
    <alternativeName>
        <fullName evidence="1">Chaperonin-60</fullName>
        <shortName evidence="1">Cpn60</shortName>
    </alternativeName>
</protein>
<dbReference type="EC" id="5.6.1.7" evidence="1"/>
<dbReference type="EMBL" id="CP000103">
    <property type="protein sequence ID" value="ABB75635.1"/>
    <property type="molecule type" value="Genomic_DNA"/>
</dbReference>
<dbReference type="RefSeq" id="WP_011381638.1">
    <property type="nucleotide sequence ID" value="NC_007614.1"/>
</dbReference>
<dbReference type="SMR" id="Q2Y6I6"/>
<dbReference type="STRING" id="323848.Nmul_A2344"/>
<dbReference type="KEGG" id="nmu:Nmul_A2344"/>
<dbReference type="eggNOG" id="COG0459">
    <property type="taxonomic scope" value="Bacteria"/>
</dbReference>
<dbReference type="HOGENOM" id="CLU_016503_3_0_4"/>
<dbReference type="OrthoDB" id="9766614at2"/>
<dbReference type="Proteomes" id="UP000002718">
    <property type="component" value="Chromosome"/>
</dbReference>
<dbReference type="GO" id="GO:0005737">
    <property type="term" value="C:cytoplasm"/>
    <property type="evidence" value="ECO:0007669"/>
    <property type="project" value="UniProtKB-SubCell"/>
</dbReference>
<dbReference type="GO" id="GO:0005524">
    <property type="term" value="F:ATP binding"/>
    <property type="evidence" value="ECO:0007669"/>
    <property type="project" value="UniProtKB-UniRule"/>
</dbReference>
<dbReference type="GO" id="GO:0140662">
    <property type="term" value="F:ATP-dependent protein folding chaperone"/>
    <property type="evidence" value="ECO:0007669"/>
    <property type="project" value="InterPro"/>
</dbReference>
<dbReference type="GO" id="GO:0016853">
    <property type="term" value="F:isomerase activity"/>
    <property type="evidence" value="ECO:0007669"/>
    <property type="project" value="UniProtKB-KW"/>
</dbReference>
<dbReference type="GO" id="GO:0051082">
    <property type="term" value="F:unfolded protein binding"/>
    <property type="evidence" value="ECO:0007669"/>
    <property type="project" value="UniProtKB-UniRule"/>
</dbReference>
<dbReference type="GO" id="GO:0042026">
    <property type="term" value="P:protein refolding"/>
    <property type="evidence" value="ECO:0007669"/>
    <property type="project" value="UniProtKB-UniRule"/>
</dbReference>
<dbReference type="CDD" id="cd03344">
    <property type="entry name" value="GroEL"/>
    <property type="match status" value="1"/>
</dbReference>
<dbReference type="FunFam" id="1.10.560.10:FF:000001">
    <property type="entry name" value="60 kDa chaperonin"/>
    <property type="match status" value="1"/>
</dbReference>
<dbReference type="FunFam" id="3.50.7.10:FF:000001">
    <property type="entry name" value="60 kDa chaperonin"/>
    <property type="match status" value="1"/>
</dbReference>
<dbReference type="Gene3D" id="3.50.7.10">
    <property type="entry name" value="GroEL"/>
    <property type="match status" value="1"/>
</dbReference>
<dbReference type="Gene3D" id="1.10.560.10">
    <property type="entry name" value="GroEL-like equatorial domain"/>
    <property type="match status" value="1"/>
</dbReference>
<dbReference type="Gene3D" id="3.30.260.10">
    <property type="entry name" value="TCP-1-like chaperonin intermediate domain"/>
    <property type="match status" value="1"/>
</dbReference>
<dbReference type="HAMAP" id="MF_00600">
    <property type="entry name" value="CH60"/>
    <property type="match status" value="1"/>
</dbReference>
<dbReference type="InterPro" id="IPR018370">
    <property type="entry name" value="Chaperonin_Cpn60_CS"/>
</dbReference>
<dbReference type="InterPro" id="IPR001844">
    <property type="entry name" value="Cpn60/GroEL"/>
</dbReference>
<dbReference type="InterPro" id="IPR002423">
    <property type="entry name" value="Cpn60/GroEL/TCP-1"/>
</dbReference>
<dbReference type="InterPro" id="IPR027409">
    <property type="entry name" value="GroEL-like_apical_dom_sf"/>
</dbReference>
<dbReference type="InterPro" id="IPR027413">
    <property type="entry name" value="GROEL-like_equatorial_sf"/>
</dbReference>
<dbReference type="InterPro" id="IPR027410">
    <property type="entry name" value="TCP-1-like_intermed_sf"/>
</dbReference>
<dbReference type="NCBIfam" id="TIGR02348">
    <property type="entry name" value="GroEL"/>
    <property type="match status" value="1"/>
</dbReference>
<dbReference type="NCBIfam" id="NF000592">
    <property type="entry name" value="PRK00013.1"/>
    <property type="match status" value="1"/>
</dbReference>
<dbReference type="NCBIfam" id="NF009487">
    <property type="entry name" value="PRK12849.1"/>
    <property type="match status" value="1"/>
</dbReference>
<dbReference type="NCBIfam" id="NF009488">
    <property type="entry name" value="PRK12850.1"/>
    <property type="match status" value="1"/>
</dbReference>
<dbReference type="NCBIfam" id="NF009489">
    <property type="entry name" value="PRK12851.1"/>
    <property type="match status" value="1"/>
</dbReference>
<dbReference type="PANTHER" id="PTHR45633">
    <property type="entry name" value="60 KDA HEAT SHOCK PROTEIN, MITOCHONDRIAL"/>
    <property type="match status" value="1"/>
</dbReference>
<dbReference type="Pfam" id="PF00118">
    <property type="entry name" value="Cpn60_TCP1"/>
    <property type="match status" value="1"/>
</dbReference>
<dbReference type="PRINTS" id="PR00298">
    <property type="entry name" value="CHAPERONIN60"/>
</dbReference>
<dbReference type="SUPFAM" id="SSF52029">
    <property type="entry name" value="GroEL apical domain-like"/>
    <property type="match status" value="1"/>
</dbReference>
<dbReference type="SUPFAM" id="SSF48592">
    <property type="entry name" value="GroEL equatorial domain-like"/>
    <property type="match status" value="1"/>
</dbReference>
<dbReference type="SUPFAM" id="SSF54849">
    <property type="entry name" value="GroEL-intermediate domain like"/>
    <property type="match status" value="1"/>
</dbReference>
<dbReference type="PROSITE" id="PS00296">
    <property type="entry name" value="CHAPERONINS_CPN60"/>
    <property type="match status" value="1"/>
</dbReference>
<keyword id="KW-0067">ATP-binding</keyword>
<keyword id="KW-0143">Chaperone</keyword>
<keyword id="KW-0963">Cytoplasm</keyword>
<keyword id="KW-0413">Isomerase</keyword>
<keyword id="KW-0547">Nucleotide-binding</keyword>
<keyword id="KW-1185">Reference proteome</keyword>
<proteinExistence type="inferred from homology"/>